<name>TRPI_PSEAE</name>
<gene>
    <name evidence="7" type="primary">trpI</name>
    <name evidence="9" type="ordered locus">PA0037</name>
</gene>
<protein>
    <recommendedName>
        <fullName evidence="8">HTH-type transcriptional regulator TrpI</fullName>
    </recommendedName>
    <alternativeName>
        <fullName evidence="8">TrpBA operon transcriptional activator</fullName>
    </alternativeName>
</protein>
<dbReference type="EMBL" id="M21093">
    <property type="protein sequence ID" value="AAD15136.1"/>
    <property type="molecule type" value="Genomic_DNA"/>
</dbReference>
<dbReference type="EMBL" id="X51868">
    <property type="protein sequence ID" value="CAA36157.1"/>
    <property type="molecule type" value="Genomic_DNA"/>
</dbReference>
<dbReference type="EMBL" id="AE004091">
    <property type="protein sequence ID" value="AAG03427.1"/>
    <property type="molecule type" value="Genomic_DNA"/>
</dbReference>
<dbReference type="PIR" id="A32234">
    <property type="entry name" value="A30769"/>
</dbReference>
<dbReference type="PIR" id="A83641">
    <property type="entry name" value="A83641"/>
</dbReference>
<dbReference type="PIR" id="S12643">
    <property type="entry name" value="S12643"/>
</dbReference>
<dbReference type="RefSeq" id="NP_248727.1">
    <property type="nucleotide sequence ID" value="NC_002516.2"/>
</dbReference>
<dbReference type="RefSeq" id="WP_003114633.1">
    <property type="nucleotide sequence ID" value="NZ_QZGE01000012.1"/>
</dbReference>
<dbReference type="SMR" id="P11720"/>
<dbReference type="STRING" id="208964.PA0037"/>
<dbReference type="PaxDb" id="208964-PA0037"/>
<dbReference type="GeneID" id="883090"/>
<dbReference type="KEGG" id="pae:PA0037"/>
<dbReference type="PATRIC" id="fig|208964.12.peg.37"/>
<dbReference type="PseudoCAP" id="PA0037"/>
<dbReference type="HOGENOM" id="CLU_039613_37_2_6"/>
<dbReference type="InParanoid" id="P11720"/>
<dbReference type="OrthoDB" id="6787458at2"/>
<dbReference type="PhylomeDB" id="P11720"/>
<dbReference type="BioCyc" id="PAER208964:G1FZ6-38-MONOMER"/>
<dbReference type="Proteomes" id="UP000002438">
    <property type="component" value="Chromosome"/>
</dbReference>
<dbReference type="CollecTF" id="EXPREG_00000910"/>
<dbReference type="GO" id="GO:0032993">
    <property type="term" value="C:protein-DNA complex"/>
    <property type="evidence" value="ECO:0000353"/>
    <property type="project" value="CollecTF"/>
</dbReference>
<dbReference type="GO" id="GO:0003700">
    <property type="term" value="F:DNA-binding transcription factor activity"/>
    <property type="evidence" value="ECO:0000318"/>
    <property type="project" value="GO_Central"/>
</dbReference>
<dbReference type="GO" id="GO:0043565">
    <property type="term" value="F:sequence-specific DNA binding"/>
    <property type="evidence" value="ECO:0000353"/>
    <property type="project" value="CollecTF"/>
</dbReference>
<dbReference type="GO" id="GO:0006351">
    <property type="term" value="P:DNA-templated transcription"/>
    <property type="evidence" value="ECO:0000318"/>
    <property type="project" value="GO_Central"/>
</dbReference>
<dbReference type="GO" id="GO:0000162">
    <property type="term" value="P:L-tryptophan biosynthetic process"/>
    <property type="evidence" value="ECO:0007669"/>
    <property type="project" value="UniProtKB-KW"/>
</dbReference>
<dbReference type="GO" id="GO:2000284">
    <property type="term" value="P:positive regulation of amino acid biosynthetic process"/>
    <property type="evidence" value="ECO:0000315"/>
    <property type="project" value="PseudoCAP"/>
</dbReference>
<dbReference type="GO" id="GO:0006355">
    <property type="term" value="P:regulation of DNA-templated transcription"/>
    <property type="evidence" value="ECO:0000314"/>
    <property type="project" value="PseudoCAP"/>
</dbReference>
<dbReference type="CDD" id="cd08482">
    <property type="entry name" value="PBP2_TrpI"/>
    <property type="match status" value="1"/>
</dbReference>
<dbReference type="FunFam" id="1.10.10.10:FF:000038">
    <property type="entry name" value="Glycine cleavage system transcriptional activator"/>
    <property type="match status" value="1"/>
</dbReference>
<dbReference type="FunFam" id="3.40.190.10:FF:000017">
    <property type="entry name" value="Glycine cleavage system transcriptional activator"/>
    <property type="match status" value="1"/>
</dbReference>
<dbReference type="Gene3D" id="3.40.190.10">
    <property type="entry name" value="Periplasmic binding protein-like II"/>
    <property type="match status" value="2"/>
</dbReference>
<dbReference type="Gene3D" id="1.10.10.10">
    <property type="entry name" value="Winged helix-like DNA-binding domain superfamily/Winged helix DNA-binding domain"/>
    <property type="match status" value="1"/>
</dbReference>
<dbReference type="InterPro" id="IPR005119">
    <property type="entry name" value="LysR_subst-bd"/>
</dbReference>
<dbReference type="InterPro" id="IPR037418">
    <property type="entry name" value="TrpI_PBP2"/>
</dbReference>
<dbReference type="InterPro" id="IPR000847">
    <property type="entry name" value="Tscrpt_reg_HTH_LysR"/>
</dbReference>
<dbReference type="InterPro" id="IPR036388">
    <property type="entry name" value="WH-like_DNA-bd_sf"/>
</dbReference>
<dbReference type="InterPro" id="IPR036390">
    <property type="entry name" value="WH_DNA-bd_sf"/>
</dbReference>
<dbReference type="PANTHER" id="PTHR30537">
    <property type="entry name" value="HTH-TYPE TRANSCRIPTIONAL REGULATOR"/>
    <property type="match status" value="1"/>
</dbReference>
<dbReference type="PANTHER" id="PTHR30537:SF74">
    <property type="entry name" value="HTH-TYPE TRANSCRIPTIONAL REGULATOR TRPI"/>
    <property type="match status" value="1"/>
</dbReference>
<dbReference type="Pfam" id="PF00126">
    <property type="entry name" value="HTH_1"/>
    <property type="match status" value="1"/>
</dbReference>
<dbReference type="Pfam" id="PF03466">
    <property type="entry name" value="LysR_substrate"/>
    <property type="match status" value="1"/>
</dbReference>
<dbReference type="PRINTS" id="PR00039">
    <property type="entry name" value="HTHLYSR"/>
</dbReference>
<dbReference type="SUPFAM" id="SSF53850">
    <property type="entry name" value="Periplasmic binding protein-like II"/>
    <property type="match status" value="1"/>
</dbReference>
<dbReference type="SUPFAM" id="SSF46785">
    <property type="entry name" value="Winged helix' DNA-binding domain"/>
    <property type="match status" value="1"/>
</dbReference>
<dbReference type="PROSITE" id="PS50931">
    <property type="entry name" value="HTH_LYSR"/>
    <property type="match status" value="1"/>
</dbReference>
<feature type="chain" id="PRO_0000105763" description="HTH-type transcriptional regulator TrpI">
    <location>
        <begin position="1"/>
        <end position="295"/>
    </location>
</feature>
<feature type="domain" description="HTH lysR-type" evidence="1">
    <location>
        <begin position="6"/>
        <end position="63"/>
    </location>
</feature>
<feature type="DNA-binding region" description="H-T-H motif" evidence="1">
    <location>
        <begin position="23"/>
        <end position="42"/>
    </location>
</feature>
<feature type="sequence variant" description="In strain: PAC174.">
    <original>D</original>
    <variation>E</variation>
    <location>
        <position position="46"/>
    </location>
</feature>
<feature type="sequence variant" description="In strain: PAC174.">
    <original>K</original>
    <variation>R</variation>
    <location>
        <position position="55"/>
    </location>
</feature>
<feature type="sequence variant" description="In strain: PAC174.">
    <original>Q</original>
    <variation>R</variation>
    <location>
        <position position="115"/>
    </location>
</feature>
<feature type="sequence variant" description="In strain: PAC174.">
    <original>P</original>
    <variation>S</variation>
    <location>
        <position position="163"/>
    </location>
</feature>
<feature type="sequence variant" description="In strain: PAC174.">
    <original>V</original>
    <variation>L</variation>
    <location>
        <position position="170"/>
    </location>
</feature>
<feature type="sequence variant" description="In strain: PAC174.">
    <original>A</original>
    <variation>S</variation>
    <location>
        <position position="181"/>
    </location>
</feature>
<feature type="sequence variant" description="In strain: PAC174.">
    <original>WA</original>
    <variation>S</variation>
    <location>
        <begin position="206"/>
        <end position="207"/>
    </location>
</feature>
<feature type="sequence conflict" description="In Ref. 2; CAA36157." evidence="8" ref="2">
    <original>S</original>
    <variation>G</variation>
    <location>
        <position position="209"/>
    </location>
</feature>
<feature type="sequence conflict" description="In Ref. 1; AAD15136 and 2; CAA36157." evidence="8" ref="1 2">
    <original>GRLAA</original>
    <variation>APGG</variation>
    <location>
        <begin position="254"/>
        <end position="258"/>
    </location>
</feature>
<proteinExistence type="evidence at protein level"/>
<keyword id="KW-0010">Activator</keyword>
<keyword id="KW-0028">Amino-acid biosynthesis</keyword>
<keyword id="KW-0057">Aromatic amino acid biosynthesis</keyword>
<keyword id="KW-0238">DNA-binding</keyword>
<keyword id="KW-1185">Reference proteome</keyword>
<keyword id="KW-0678">Repressor</keyword>
<keyword id="KW-0804">Transcription</keyword>
<keyword id="KW-0805">Transcription regulation</keyword>
<keyword id="KW-0822">Tryptophan biosynthesis</keyword>
<comment type="function">
    <text evidence="2 3 4 5 6">Activates the expression of the trpBA genes, which encode the two tryptophan synthase subunits, and represses initiation at its own promoter. Acts by binding to two adjacent sites in the intergenic region. In the absence of the inducer indoleglycerol phosphate (InGP), TrpI binds to site I. In the presence of InGP, TrpI binds to site I and site II. Binding to site II is site I dependent. InGP strongly stimulates binding to site II and is required for maximal activation of trpBA.</text>
</comment>
<comment type="subunit">
    <text evidence="3">Homotetramer.</text>
</comment>
<comment type="induction">
    <text evidence="4">Negatively autoregulated.</text>
</comment>
<comment type="miscellaneous">
    <text evidence="4">The trpAB promoter and the trpI promoter overlap, so that RNA polymerase cannot form open complexes with both promoters simultaneously.</text>
</comment>
<comment type="similarity">
    <text evidence="8">Belongs to the LysR transcriptional regulatory family.</text>
</comment>
<accession>P11720</accession>
<accession>Q9I795</accession>
<reference key="1">
    <citation type="journal article" date="1989" name="J. Bacteriol.">
        <title>Sequence of the Pseudomonas aeruginosa trpI activator gene and relatedness of trpI to other procaryotic regulatory genes.</title>
        <authorList>
            <person name="Chang M."/>
            <person name="Hadero A."/>
            <person name="Crawford I.P."/>
        </authorList>
    </citation>
    <scope>NUCLEOTIDE SEQUENCE [GENOMIC DNA]</scope>
    <source>
        <strain>PAC174</strain>
    </source>
</reference>
<reference key="2">
    <citation type="journal article" date="1990" name="Nucleic Acids Res.">
        <title>The roles of indoleglycerol phosphate and the TrpI protein in the expression of trpBA from Pseudomonas aeruginosa.</title>
        <authorList>
            <person name="Chang M."/>
            <person name="Crawford I.P."/>
        </authorList>
    </citation>
    <scope>NUCLEOTIDE SEQUENCE [GENOMIC DNA]</scope>
    <scope>FUNCTION</scope>
    <scope>DNA-BINDING</scope>
    <source>
        <strain>ATCC 15692 / DSM 22644 / CIP 104116 / JCM 14847 / LMG 12228 / 1C / PRS 101 / PAO1</strain>
    </source>
</reference>
<reference key="3">
    <citation type="journal article" date="2000" name="Nature">
        <title>Complete genome sequence of Pseudomonas aeruginosa PAO1, an opportunistic pathogen.</title>
        <authorList>
            <person name="Stover C.K."/>
            <person name="Pham X.-Q.T."/>
            <person name="Erwin A.L."/>
            <person name="Mizoguchi S.D."/>
            <person name="Warrener P."/>
            <person name="Hickey M.J."/>
            <person name="Brinkman F.S.L."/>
            <person name="Hufnagle W.O."/>
            <person name="Kowalik D.J."/>
            <person name="Lagrou M."/>
            <person name="Garber R.L."/>
            <person name="Goltry L."/>
            <person name="Tolentino E."/>
            <person name="Westbrock-Wadman S."/>
            <person name="Yuan Y."/>
            <person name="Brody L.L."/>
            <person name="Coulter S.N."/>
            <person name="Folger K.R."/>
            <person name="Kas A."/>
            <person name="Larbig K."/>
            <person name="Lim R.M."/>
            <person name="Smith K.A."/>
            <person name="Spencer D.H."/>
            <person name="Wong G.K.-S."/>
            <person name="Wu Z."/>
            <person name="Paulsen I.T."/>
            <person name="Reizer J."/>
            <person name="Saier M.H. Jr."/>
            <person name="Hancock R.E.W."/>
            <person name="Lory S."/>
            <person name="Olson M.V."/>
        </authorList>
    </citation>
    <scope>NUCLEOTIDE SEQUENCE [LARGE SCALE GENOMIC DNA]</scope>
    <source>
        <strain>ATCC 15692 / DSM 22644 / CIP 104116 / JCM 14847 / LMG 12228 / 1C / PRS 101 / PAO1</strain>
    </source>
</reference>
<reference key="4">
    <citation type="journal article" date="1991" name="EMBO J.">
        <title>Mutations in TrpI binding site II that differentially affect activation of the trpBA promoter of Pseudomonas aeruginosa.</title>
        <authorList>
            <person name="Gao J."/>
            <person name="Gussin G.N."/>
        </authorList>
    </citation>
    <scope>FUNCTION</scope>
    <scope>DNA-BINDING</scope>
</reference>
<reference key="5">
    <citation type="journal article" date="1991" name="J. Bacteriol.">
        <title>In vitro determination of the effect of indoleglycerol phosphate on the interaction of purified TrpI protein with its DNA-binding sites.</title>
        <authorList>
            <person name="Chang M."/>
            <person name="Crawford I.P."/>
        </authorList>
    </citation>
    <scope>FUNCTION</scope>
    <scope>DNA-BINDING</scope>
    <scope>SUBUNIT</scope>
</reference>
<reference key="6">
    <citation type="journal article" date="1991" name="J. Bacteriol.">
        <title>Activation of the trpBA promoter of Pseudomonas aeruginosa by TrpI protein in vitro.</title>
        <authorList>
            <person name="Gao J.G."/>
            <person name="Gussin G.N."/>
        </authorList>
    </citation>
    <scope>FUNCTION</scope>
    <scope>DNA-BINDING</scope>
    <scope>INDUCTION</scope>
</reference>
<reference key="7">
    <citation type="journal article" date="1998" name="Gene">
        <title>Recognition of binding sites I and II by the TrpI activator protein of pseudomonas aeruginosa: efficient binding to both sites requires InGP even when site II is replaced by site I.</title>
        <authorList>
            <person name="Olekhnovich I."/>
            <person name="Gussin G.N."/>
        </authorList>
    </citation>
    <scope>FUNCTION</scope>
    <scope>DNA-BINDING</scope>
</reference>
<sequence length="295" mass="32253">MSRDLPSLNALRAFEAAARLHSISLAAEELHVTHGAVSRQVRLLEDDLGVALFGKDGRGVKLTDSGVRLRDACGDAFERLRGVCAELRRQTAEAPFVLGVPGSLLARWFIPRLDQLNRALPDLRLQLSTSEGEFDPRRPGLDAMLWFAEPPWPADMQVFELAPERMGPVVSPRLAQETGLAQAPAARLLQEPLLHTASRPQAWPAWAASQGLAAEALRYGQGFEHLYYLLEAAVAGLGVAIAPEPLVRDDLAAGRLAAPWGFIETDARLALWVPARLHDPRAGRLAQWLREQLAG</sequence>
<evidence type="ECO:0000255" key="1">
    <source>
        <dbReference type="PROSITE-ProRule" id="PRU00253"/>
    </source>
</evidence>
<evidence type="ECO:0000269" key="2">
    <source>
    </source>
</evidence>
<evidence type="ECO:0000269" key="3">
    <source>
    </source>
</evidence>
<evidence type="ECO:0000269" key="4">
    <source>
    </source>
</evidence>
<evidence type="ECO:0000269" key="5">
    <source>
    </source>
</evidence>
<evidence type="ECO:0000269" key="6">
    <source>
    </source>
</evidence>
<evidence type="ECO:0000303" key="7">
    <source>
    </source>
</evidence>
<evidence type="ECO:0000305" key="8"/>
<evidence type="ECO:0000312" key="9">
    <source>
        <dbReference type="EMBL" id="AAG03427.1"/>
    </source>
</evidence>
<organism>
    <name type="scientific">Pseudomonas aeruginosa (strain ATCC 15692 / DSM 22644 / CIP 104116 / JCM 14847 / LMG 12228 / 1C / PRS 101 / PAO1)</name>
    <dbReference type="NCBI Taxonomy" id="208964"/>
    <lineage>
        <taxon>Bacteria</taxon>
        <taxon>Pseudomonadati</taxon>
        <taxon>Pseudomonadota</taxon>
        <taxon>Gammaproteobacteria</taxon>
        <taxon>Pseudomonadales</taxon>
        <taxon>Pseudomonadaceae</taxon>
        <taxon>Pseudomonas</taxon>
    </lineage>
</organism>